<dbReference type="EMBL" id="L05390">
    <property type="protein sequence ID" value="AAA02832.1"/>
    <property type="molecule type" value="Genomic_DNA"/>
</dbReference>
<dbReference type="PIR" id="JN0824">
    <property type="entry name" value="JN0824"/>
</dbReference>
<dbReference type="SMR" id="Q05362"/>
<dbReference type="CDD" id="cd06991">
    <property type="entry name" value="cupin_TcmJ-like"/>
    <property type="match status" value="1"/>
</dbReference>
<dbReference type="Gene3D" id="2.60.120.10">
    <property type="entry name" value="Jelly Rolls"/>
    <property type="match status" value="1"/>
</dbReference>
<dbReference type="InterPro" id="IPR013096">
    <property type="entry name" value="Cupin_2"/>
</dbReference>
<dbReference type="InterPro" id="IPR052044">
    <property type="entry name" value="PKS_Associated_Protein"/>
</dbReference>
<dbReference type="InterPro" id="IPR016672">
    <property type="entry name" value="Polyketide_Synth_CurC_prd"/>
</dbReference>
<dbReference type="InterPro" id="IPR014710">
    <property type="entry name" value="RmlC-like_jellyroll"/>
</dbReference>
<dbReference type="InterPro" id="IPR011051">
    <property type="entry name" value="RmlC_Cupin_sf"/>
</dbReference>
<dbReference type="PANTHER" id="PTHR36114">
    <property type="entry name" value="16.7 KDA PROTEIN IN WHIE LOCUS"/>
    <property type="match status" value="1"/>
</dbReference>
<dbReference type="PANTHER" id="PTHR36114:SF1">
    <property type="entry name" value="16.7 KDA PROTEIN IN WHIE LOCUS"/>
    <property type="match status" value="1"/>
</dbReference>
<dbReference type="Pfam" id="PF07883">
    <property type="entry name" value="Cupin_2"/>
    <property type="match status" value="1"/>
</dbReference>
<dbReference type="PIRSF" id="PIRSF016602">
    <property type="entry name" value="CurC_prd"/>
    <property type="match status" value="1"/>
</dbReference>
<dbReference type="SUPFAM" id="SSF51182">
    <property type="entry name" value="RmlC-like cupins"/>
    <property type="match status" value="1"/>
</dbReference>
<reference key="1">
    <citation type="journal article" date="1993" name="Gene">
        <title>Hybridization and DNA sequence analyses suggest an early evolutionary divergence of related biosynthetic gene sets encoding polyketide antibiotics and spore pigments in Streptomyces spp.</title>
        <authorList>
            <person name="Blanco G."/>
            <person name="Brian P."/>
            <person name="Pereda A."/>
            <person name="Mendez C."/>
            <person name="Salas J.A."/>
            <person name="Chater K.F."/>
        </authorList>
    </citation>
    <scope>NUCLEOTIDE SEQUENCE [GENOMIC DNA]</scope>
    <source>
        <strain>NRRL 2381</strain>
    </source>
</reference>
<name>SCHB_STRHA</name>
<comment type="similarity">
    <text evidence="3">Belongs to the SchB/CurC family.</text>
</comment>
<accession>Q05362</accession>
<protein>
    <recommendedName>
        <fullName>Protein SchB</fullName>
    </recommendedName>
</protein>
<organism>
    <name type="scientific">Streptomyces halstedii</name>
    <dbReference type="NCBI Taxonomy" id="1944"/>
    <lineage>
        <taxon>Bacteria</taxon>
        <taxon>Bacillati</taxon>
        <taxon>Actinomycetota</taxon>
        <taxon>Actinomycetes</taxon>
        <taxon>Kitasatosporales</taxon>
        <taxon>Streptomycetaceae</taxon>
        <taxon>Streptomyces</taxon>
    </lineage>
</organism>
<proteinExistence type="inferred from homology"/>
<evidence type="ECO:0000255" key="1"/>
<evidence type="ECO:0000256" key="2">
    <source>
        <dbReference type="SAM" id="MobiDB-lite"/>
    </source>
</evidence>
<evidence type="ECO:0000305" key="3"/>
<feature type="chain" id="PRO_0000097624" description="Protein SchB">
    <location>
        <begin position="1"/>
        <end position="138"/>
    </location>
</feature>
<feature type="domain" description="Cupin type-2" evidence="1">
    <location>
        <begin position="42"/>
        <end position="108"/>
    </location>
</feature>
<feature type="region of interest" description="Disordered" evidence="2">
    <location>
        <begin position="118"/>
        <end position="138"/>
    </location>
</feature>
<gene>
    <name type="primary">schB</name>
</gene>
<sequence>MTEQQARIVAFDDVPPNRRRGGDVRALLTPTTAGATSGFMGVAVVRPGERISEHYHPYSEEFVYVTAGAFEVDLDDVPHPLRTGQGLLIPKDVRHRFRNTGDVEARLVFHLGPLAPRPDLGHVDTEETDETAPAGVVS</sequence>